<comment type="function">
    <text evidence="1">One of the primary rRNA binding proteins, it binds directly to 16S rRNA central domain where it helps coordinate assembly of the platform of the 30S subunit.</text>
</comment>
<comment type="subunit">
    <text evidence="1">Part of the 30S ribosomal subunit.</text>
</comment>
<comment type="similarity">
    <text evidence="1">Belongs to the universal ribosomal protein uS8 family.</text>
</comment>
<protein>
    <recommendedName>
        <fullName evidence="1">Small ribosomal subunit protein uS8</fullName>
    </recommendedName>
    <alternativeName>
        <fullName evidence="2">30S ribosomal protein S8</fullName>
    </alternativeName>
</protein>
<sequence length="130" mass="14335">MSLMDPLANALNHVSNCEGVGKNVAYLKPASKLIGRVLKVMQDQGYIGNFEYIEDGKAGVYKVDLIGQINKCGAVKPRYAVKYQEFEKFEKRYLPAKGFGLLIVSTPKGLMTHDEARTAGVGGRLISYVY</sequence>
<gene>
    <name evidence="1" type="primary">rps8</name>
</gene>
<feature type="chain" id="PRO_0000126543" description="Small ribosomal subunit protein uS8">
    <location>
        <begin position="1"/>
        <end position="130"/>
    </location>
</feature>
<organism>
    <name type="scientific">Methanococcus vannielii</name>
    <dbReference type="NCBI Taxonomy" id="2187"/>
    <lineage>
        <taxon>Archaea</taxon>
        <taxon>Methanobacteriati</taxon>
        <taxon>Methanobacteriota</taxon>
        <taxon>Methanomada group</taxon>
        <taxon>Methanococci</taxon>
        <taxon>Methanococcales</taxon>
        <taxon>Methanococcaceae</taxon>
        <taxon>Methanococcus</taxon>
    </lineage>
</organism>
<dbReference type="EMBL" id="X16720">
    <property type="protein sequence ID" value="CAA34695.1"/>
    <property type="molecule type" value="Genomic_DNA"/>
</dbReference>
<dbReference type="PIR" id="S05619">
    <property type="entry name" value="R3MX8"/>
</dbReference>
<dbReference type="SMR" id="P14038"/>
<dbReference type="OMA" id="LPAKNFG"/>
<dbReference type="GO" id="GO:1990904">
    <property type="term" value="C:ribonucleoprotein complex"/>
    <property type="evidence" value="ECO:0007669"/>
    <property type="project" value="UniProtKB-KW"/>
</dbReference>
<dbReference type="GO" id="GO:0005840">
    <property type="term" value="C:ribosome"/>
    <property type="evidence" value="ECO:0007669"/>
    <property type="project" value="UniProtKB-KW"/>
</dbReference>
<dbReference type="GO" id="GO:0019843">
    <property type="term" value="F:rRNA binding"/>
    <property type="evidence" value="ECO:0007669"/>
    <property type="project" value="UniProtKB-UniRule"/>
</dbReference>
<dbReference type="GO" id="GO:0003735">
    <property type="term" value="F:structural constituent of ribosome"/>
    <property type="evidence" value="ECO:0007669"/>
    <property type="project" value="InterPro"/>
</dbReference>
<dbReference type="GO" id="GO:0006412">
    <property type="term" value="P:translation"/>
    <property type="evidence" value="ECO:0007669"/>
    <property type="project" value="UniProtKB-UniRule"/>
</dbReference>
<dbReference type="FunFam" id="3.30.1370.30:FF:000001">
    <property type="entry name" value="40S ribosomal protein S15a"/>
    <property type="match status" value="1"/>
</dbReference>
<dbReference type="Gene3D" id="3.30.1370.30">
    <property type="match status" value="1"/>
</dbReference>
<dbReference type="Gene3D" id="3.30.1490.10">
    <property type="match status" value="1"/>
</dbReference>
<dbReference type="HAMAP" id="MF_01302_A">
    <property type="entry name" value="Ribosomal_uS8_A"/>
    <property type="match status" value="1"/>
</dbReference>
<dbReference type="InterPro" id="IPR000630">
    <property type="entry name" value="Ribosomal_uS8"/>
</dbReference>
<dbReference type="InterPro" id="IPR047863">
    <property type="entry name" value="Ribosomal_uS8_CS"/>
</dbReference>
<dbReference type="InterPro" id="IPR035987">
    <property type="entry name" value="Ribosomal_uS8_sf"/>
</dbReference>
<dbReference type="NCBIfam" id="NF003115">
    <property type="entry name" value="PRK04034.1"/>
    <property type="match status" value="1"/>
</dbReference>
<dbReference type="PANTHER" id="PTHR11758">
    <property type="entry name" value="40S RIBOSOMAL PROTEIN S15A"/>
    <property type="match status" value="1"/>
</dbReference>
<dbReference type="Pfam" id="PF00410">
    <property type="entry name" value="Ribosomal_S8"/>
    <property type="match status" value="1"/>
</dbReference>
<dbReference type="SUPFAM" id="SSF56047">
    <property type="entry name" value="Ribosomal protein S8"/>
    <property type="match status" value="1"/>
</dbReference>
<dbReference type="PROSITE" id="PS00053">
    <property type="entry name" value="RIBOSOMAL_S8"/>
    <property type="match status" value="1"/>
</dbReference>
<proteinExistence type="inferred from homology"/>
<reference key="1">
    <citation type="journal article" date="1989" name="J. Mol. Biol.">
        <title>Organization and structure of the Methanococcus transcriptional unit homologous to the Escherichia coli 'spectinomycin operon'. Implications for the evolutionary relationship of 70 S and 80 S ribosomes.</title>
        <authorList>
            <person name="Auer J."/>
            <person name="Spicker G."/>
            <person name="Boeck A."/>
        </authorList>
    </citation>
    <scope>NUCLEOTIDE SEQUENCE [GENOMIC DNA]</scope>
</reference>
<name>RS8_METVA</name>
<evidence type="ECO:0000255" key="1">
    <source>
        <dbReference type="HAMAP-Rule" id="MF_01302"/>
    </source>
</evidence>
<evidence type="ECO:0000305" key="2"/>
<keyword id="KW-0687">Ribonucleoprotein</keyword>
<keyword id="KW-0689">Ribosomal protein</keyword>
<keyword id="KW-0694">RNA-binding</keyword>
<keyword id="KW-0699">rRNA-binding</keyword>
<accession>P14038</accession>